<reference key="1">
    <citation type="journal article" date="2008" name="Antimicrob. Agents Chemother.">
        <title>Mutated response regulator graR is responsible for phenotypic conversion of Staphylococcus aureus from heterogeneous vancomycin-intermediate resistance to vancomycin-intermediate resistance.</title>
        <authorList>
            <person name="Neoh H.-M."/>
            <person name="Cui L."/>
            <person name="Yuzawa H."/>
            <person name="Takeuchi F."/>
            <person name="Matsuo M."/>
            <person name="Hiramatsu K."/>
        </authorList>
    </citation>
    <scope>NUCLEOTIDE SEQUENCE [LARGE SCALE GENOMIC DNA]</scope>
    <source>
        <strain>Mu3 / ATCC 700698</strain>
    </source>
</reference>
<proteinExistence type="inferred from homology"/>
<evidence type="ECO:0000255" key="1">
    <source>
        <dbReference type="HAMAP-Rule" id="MF_01131"/>
    </source>
</evidence>
<feature type="chain" id="PRO_1000065415" description="Redox-sensing transcriptional repressor Rex">
    <location>
        <begin position="1"/>
        <end position="211"/>
    </location>
</feature>
<feature type="DNA-binding region" description="H-T-H motif" evidence="1">
    <location>
        <begin position="17"/>
        <end position="56"/>
    </location>
</feature>
<feature type="binding site" evidence="1">
    <location>
        <begin position="91"/>
        <end position="96"/>
    </location>
    <ligand>
        <name>NAD(+)</name>
        <dbReference type="ChEBI" id="CHEBI:57540"/>
    </ligand>
</feature>
<comment type="function">
    <text evidence="1">Modulates transcription in response to changes in cellular NADH/NAD(+) redox state.</text>
</comment>
<comment type="subunit">
    <text evidence="1">Homodimer.</text>
</comment>
<comment type="subcellular location">
    <subcellularLocation>
        <location evidence="1">Cytoplasm</location>
    </subcellularLocation>
</comment>
<comment type="similarity">
    <text evidence="1">Belongs to the transcriptional regulatory Rex family.</text>
</comment>
<gene>
    <name evidence="1" type="primary">rex</name>
    <name type="ordered locus">SAHV_2031</name>
</gene>
<organism>
    <name type="scientific">Staphylococcus aureus (strain Mu3 / ATCC 700698)</name>
    <dbReference type="NCBI Taxonomy" id="418127"/>
    <lineage>
        <taxon>Bacteria</taxon>
        <taxon>Bacillati</taxon>
        <taxon>Bacillota</taxon>
        <taxon>Bacilli</taxon>
        <taxon>Bacillales</taxon>
        <taxon>Staphylococcaceae</taxon>
        <taxon>Staphylococcus</taxon>
    </lineage>
</organism>
<protein>
    <recommendedName>
        <fullName evidence="1">Redox-sensing transcriptional repressor Rex</fullName>
    </recommendedName>
</protein>
<keyword id="KW-0963">Cytoplasm</keyword>
<keyword id="KW-0238">DNA-binding</keyword>
<keyword id="KW-0520">NAD</keyword>
<keyword id="KW-0678">Repressor</keyword>
<keyword id="KW-0804">Transcription</keyword>
<keyword id="KW-0805">Transcription regulation</keyword>
<name>REX_STAA1</name>
<sequence>MSDQVKIPRATLKRLPLYYRFVSSLKSKGIDRVNSKAISDALQIDSATIRRDFSYFGELGKKGYGYNIDSLLDFFKSELSESDMIKIAIVGVGNLGKALLTYNFSIHDDMTITEAFDVKEDVIGQKIGNVIVKDNDELITTLKKEEIDVVILTTPERVAQKVADELVQAGVKGILNFTPGRINTPSDVQVHQIDLGIELQSLLFFMKNYSE</sequence>
<accession>A7X4L6</accession>
<dbReference type="EMBL" id="AP009324">
    <property type="protein sequence ID" value="BAF78914.1"/>
    <property type="molecule type" value="Genomic_DNA"/>
</dbReference>
<dbReference type="RefSeq" id="WP_001283612.1">
    <property type="nucleotide sequence ID" value="NZ_CTYB01000034.1"/>
</dbReference>
<dbReference type="SMR" id="A7X4L6"/>
<dbReference type="KEGG" id="saw:SAHV_2031"/>
<dbReference type="HOGENOM" id="CLU_061534_1_1_9"/>
<dbReference type="GO" id="GO:0005737">
    <property type="term" value="C:cytoplasm"/>
    <property type="evidence" value="ECO:0007669"/>
    <property type="project" value="UniProtKB-SubCell"/>
</dbReference>
<dbReference type="GO" id="GO:0003677">
    <property type="term" value="F:DNA binding"/>
    <property type="evidence" value="ECO:0007669"/>
    <property type="project" value="UniProtKB-UniRule"/>
</dbReference>
<dbReference type="GO" id="GO:0003700">
    <property type="term" value="F:DNA-binding transcription factor activity"/>
    <property type="evidence" value="ECO:0007669"/>
    <property type="project" value="UniProtKB-UniRule"/>
</dbReference>
<dbReference type="GO" id="GO:0045892">
    <property type="term" value="P:negative regulation of DNA-templated transcription"/>
    <property type="evidence" value="ECO:0007669"/>
    <property type="project" value="InterPro"/>
</dbReference>
<dbReference type="GO" id="GO:0051775">
    <property type="term" value="P:response to redox state"/>
    <property type="evidence" value="ECO:0007669"/>
    <property type="project" value="InterPro"/>
</dbReference>
<dbReference type="Gene3D" id="3.40.50.720">
    <property type="entry name" value="NAD(P)-binding Rossmann-like Domain"/>
    <property type="match status" value="1"/>
</dbReference>
<dbReference type="Gene3D" id="1.10.10.10">
    <property type="entry name" value="Winged helix-like DNA-binding domain superfamily/Winged helix DNA-binding domain"/>
    <property type="match status" value="1"/>
</dbReference>
<dbReference type="HAMAP" id="MF_01131">
    <property type="entry name" value="Rex"/>
    <property type="match status" value="1"/>
</dbReference>
<dbReference type="InterPro" id="IPR003781">
    <property type="entry name" value="CoA-bd"/>
</dbReference>
<dbReference type="InterPro" id="IPR036291">
    <property type="entry name" value="NAD(P)-bd_dom_sf"/>
</dbReference>
<dbReference type="InterPro" id="IPR009718">
    <property type="entry name" value="Rex_DNA-bd_C_dom"/>
</dbReference>
<dbReference type="InterPro" id="IPR022876">
    <property type="entry name" value="Tscrpt_rep_Rex"/>
</dbReference>
<dbReference type="InterPro" id="IPR036388">
    <property type="entry name" value="WH-like_DNA-bd_sf"/>
</dbReference>
<dbReference type="InterPro" id="IPR036390">
    <property type="entry name" value="WH_DNA-bd_sf"/>
</dbReference>
<dbReference type="NCBIfam" id="NF003989">
    <property type="entry name" value="PRK05472.1-3"/>
    <property type="match status" value="1"/>
</dbReference>
<dbReference type="NCBIfam" id="NF003991">
    <property type="entry name" value="PRK05472.1-5"/>
    <property type="match status" value="1"/>
</dbReference>
<dbReference type="NCBIfam" id="NF003994">
    <property type="entry name" value="PRK05472.2-3"/>
    <property type="match status" value="1"/>
</dbReference>
<dbReference type="NCBIfam" id="NF003995">
    <property type="entry name" value="PRK05472.2-4"/>
    <property type="match status" value="1"/>
</dbReference>
<dbReference type="NCBIfam" id="NF003996">
    <property type="entry name" value="PRK05472.2-5"/>
    <property type="match status" value="1"/>
</dbReference>
<dbReference type="PANTHER" id="PTHR35786">
    <property type="entry name" value="REDOX-SENSING TRANSCRIPTIONAL REPRESSOR REX"/>
    <property type="match status" value="1"/>
</dbReference>
<dbReference type="PANTHER" id="PTHR35786:SF1">
    <property type="entry name" value="REDOX-SENSING TRANSCRIPTIONAL REPRESSOR REX 1"/>
    <property type="match status" value="1"/>
</dbReference>
<dbReference type="Pfam" id="PF02629">
    <property type="entry name" value="CoA_binding"/>
    <property type="match status" value="1"/>
</dbReference>
<dbReference type="Pfam" id="PF06971">
    <property type="entry name" value="Put_DNA-bind_N"/>
    <property type="match status" value="1"/>
</dbReference>
<dbReference type="SMART" id="SM00881">
    <property type="entry name" value="CoA_binding"/>
    <property type="match status" value="1"/>
</dbReference>
<dbReference type="SUPFAM" id="SSF51735">
    <property type="entry name" value="NAD(P)-binding Rossmann-fold domains"/>
    <property type="match status" value="1"/>
</dbReference>
<dbReference type="SUPFAM" id="SSF46785">
    <property type="entry name" value="Winged helix' DNA-binding domain"/>
    <property type="match status" value="1"/>
</dbReference>